<reference key="1">
    <citation type="journal article" date="2005" name="Proc. Natl. Acad. Sci. U.S.A.">
        <title>Complete genome sequence of Vibrio fischeri: a symbiotic bacterium with pathogenic congeners.</title>
        <authorList>
            <person name="Ruby E.G."/>
            <person name="Urbanowski M."/>
            <person name="Campbell J."/>
            <person name="Dunn A."/>
            <person name="Faini M."/>
            <person name="Gunsalus R."/>
            <person name="Lostroh P."/>
            <person name="Lupp C."/>
            <person name="McCann J."/>
            <person name="Millikan D."/>
            <person name="Schaefer A."/>
            <person name="Stabb E."/>
            <person name="Stevens A."/>
            <person name="Visick K."/>
            <person name="Whistler C."/>
            <person name="Greenberg E.P."/>
        </authorList>
    </citation>
    <scope>NUCLEOTIDE SEQUENCE [LARGE SCALE GENOMIC DNA]</scope>
    <source>
        <strain>ATCC 700601 / ES114</strain>
    </source>
</reference>
<feature type="chain" id="PRO_0000235666" description="5'-nucleotidase SurE">
    <location>
        <begin position="1"/>
        <end position="257"/>
    </location>
</feature>
<feature type="binding site" evidence="1">
    <location>
        <position position="15"/>
    </location>
    <ligand>
        <name>a divalent metal cation</name>
        <dbReference type="ChEBI" id="CHEBI:60240"/>
    </ligand>
</feature>
<feature type="binding site" evidence="1">
    <location>
        <position position="16"/>
    </location>
    <ligand>
        <name>a divalent metal cation</name>
        <dbReference type="ChEBI" id="CHEBI:60240"/>
    </ligand>
</feature>
<feature type="binding site" evidence="1">
    <location>
        <position position="46"/>
    </location>
    <ligand>
        <name>a divalent metal cation</name>
        <dbReference type="ChEBI" id="CHEBI:60240"/>
    </ligand>
</feature>
<feature type="binding site" evidence="1">
    <location>
        <position position="99"/>
    </location>
    <ligand>
        <name>a divalent metal cation</name>
        <dbReference type="ChEBI" id="CHEBI:60240"/>
    </ligand>
</feature>
<keyword id="KW-0963">Cytoplasm</keyword>
<keyword id="KW-0378">Hydrolase</keyword>
<keyword id="KW-0479">Metal-binding</keyword>
<keyword id="KW-0547">Nucleotide-binding</keyword>
<keyword id="KW-1185">Reference proteome</keyword>
<comment type="function">
    <text evidence="1">Nucleotidase that shows phosphatase activity on nucleoside 5'-monophosphates.</text>
</comment>
<comment type="catalytic activity">
    <reaction evidence="1">
        <text>a ribonucleoside 5'-phosphate + H2O = a ribonucleoside + phosphate</text>
        <dbReference type="Rhea" id="RHEA:12484"/>
        <dbReference type="ChEBI" id="CHEBI:15377"/>
        <dbReference type="ChEBI" id="CHEBI:18254"/>
        <dbReference type="ChEBI" id="CHEBI:43474"/>
        <dbReference type="ChEBI" id="CHEBI:58043"/>
        <dbReference type="EC" id="3.1.3.5"/>
    </reaction>
</comment>
<comment type="cofactor">
    <cofactor evidence="1">
        <name>a divalent metal cation</name>
        <dbReference type="ChEBI" id="CHEBI:60240"/>
    </cofactor>
    <text evidence="1">Binds 1 divalent metal cation per subunit.</text>
</comment>
<comment type="subcellular location">
    <subcellularLocation>
        <location evidence="1">Cytoplasm</location>
    </subcellularLocation>
</comment>
<comment type="similarity">
    <text evidence="1">Belongs to the SurE nucleotidase family.</text>
</comment>
<evidence type="ECO:0000255" key="1">
    <source>
        <dbReference type="HAMAP-Rule" id="MF_00060"/>
    </source>
</evidence>
<gene>
    <name evidence="1" type="primary">surE</name>
    <name type="ordered locus">VF_2070</name>
</gene>
<proteinExistence type="inferred from homology"/>
<protein>
    <recommendedName>
        <fullName evidence="1">5'-nucleotidase SurE</fullName>
        <ecNumber evidence="1">3.1.3.5</ecNumber>
    </recommendedName>
    <alternativeName>
        <fullName evidence="1">Nucleoside 5'-monophosphate phosphohydrolase</fullName>
    </alternativeName>
</protein>
<organism>
    <name type="scientific">Aliivibrio fischeri (strain ATCC 700601 / ES114)</name>
    <name type="common">Vibrio fischeri</name>
    <dbReference type="NCBI Taxonomy" id="312309"/>
    <lineage>
        <taxon>Bacteria</taxon>
        <taxon>Pseudomonadati</taxon>
        <taxon>Pseudomonadota</taxon>
        <taxon>Gammaproteobacteria</taxon>
        <taxon>Vibrionales</taxon>
        <taxon>Vibrionaceae</taxon>
        <taxon>Aliivibrio</taxon>
    </lineage>
</organism>
<sequence>METRVKKLRILLSNDDGVFAEGINTLARVLADIADITIVAPDRNRSGASNSLTLESPLRVRQIDEHIHSVQGTPTDCVHFALNELMKDNLPDLIIAGINHGANLGDDTLYSGTVAAATEGHFLGLPAIAISLVGREHFDTAAQVALKIVKNHLVSPLTTQKVLNVNVPDCEYEQLMGWEVTRLGARHHAESMIKDTDPRGETIYWLGPPGKKQDAGEGTDFFVVKQHRVSITPLQVDLTAHDSLGMITDWLSLESSK</sequence>
<name>SURE_ALIF1</name>
<accession>Q5E331</accession>
<dbReference type="EC" id="3.1.3.5" evidence="1"/>
<dbReference type="EMBL" id="CP000020">
    <property type="protein sequence ID" value="AAW86565.1"/>
    <property type="molecule type" value="Genomic_DNA"/>
</dbReference>
<dbReference type="RefSeq" id="WP_011262537.1">
    <property type="nucleotide sequence ID" value="NC_006840.2"/>
</dbReference>
<dbReference type="RefSeq" id="YP_205453.1">
    <property type="nucleotide sequence ID" value="NC_006840.2"/>
</dbReference>
<dbReference type="SMR" id="Q5E331"/>
<dbReference type="STRING" id="312309.VF_2070"/>
<dbReference type="EnsemblBacteria" id="AAW86565">
    <property type="protein sequence ID" value="AAW86565"/>
    <property type="gene ID" value="VF_2070"/>
</dbReference>
<dbReference type="GeneID" id="54164776"/>
<dbReference type="KEGG" id="vfi:VF_2070"/>
<dbReference type="PATRIC" id="fig|312309.11.peg.2113"/>
<dbReference type="eggNOG" id="COG0496">
    <property type="taxonomic scope" value="Bacteria"/>
</dbReference>
<dbReference type="HOGENOM" id="CLU_045192_1_2_6"/>
<dbReference type="OrthoDB" id="9780815at2"/>
<dbReference type="Proteomes" id="UP000000537">
    <property type="component" value="Chromosome I"/>
</dbReference>
<dbReference type="GO" id="GO:0005737">
    <property type="term" value="C:cytoplasm"/>
    <property type="evidence" value="ECO:0007669"/>
    <property type="project" value="UniProtKB-SubCell"/>
</dbReference>
<dbReference type="GO" id="GO:0008254">
    <property type="term" value="F:3'-nucleotidase activity"/>
    <property type="evidence" value="ECO:0007669"/>
    <property type="project" value="TreeGrafter"/>
</dbReference>
<dbReference type="GO" id="GO:0008253">
    <property type="term" value="F:5'-nucleotidase activity"/>
    <property type="evidence" value="ECO:0007669"/>
    <property type="project" value="UniProtKB-UniRule"/>
</dbReference>
<dbReference type="GO" id="GO:0004309">
    <property type="term" value="F:exopolyphosphatase activity"/>
    <property type="evidence" value="ECO:0007669"/>
    <property type="project" value="TreeGrafter"/>
</dbReference>
<dbReference type="GO" id="GO:0046872">
    <property type="term" value="F:metal ion binding"/>
    <property type="evidence" value="ECO:0007669"/>
    <property type="project" value="UniProtKB-UniRule"/>
</dbReference>
<dbReference type="GO" id="GO:0000166">
    <property type="term" value="F:nucleotide binding"/>
    <property type="evidence" value="ECO:0007669"/>
    <property type="project" value="UniProtKB-KW"/>
</dbReference>
<dbReference type="FunFam" id="3.40.1210.10:FF:000001">
    <property type="entry name" value="5'/3'-nucleotidase SurE"/>
    <property type="match status" value="1"/>
</dbReference>
<dbReference type="Gene3D" id="3.40.1210.10">
    <property type="entry name" value="Survival protein SurE-like phosphatase/nucleotidase"/>
    <property type="match status" value="1"/>
</dbReference>
<dbReference type="HAMAP" id="MF_00060">
    <property type="entry name" value="SurE"/>
    <property type="match status" value="1"/>
</dbReference>
<dbReference type="InterPro" id="IPR030048">
    <property type="entry name" value="SurE"/>
</dbReference>
<dbReference type="InterPro" id="IPR002828">
    <property type="entry name" value="SurE-like_Pase/nucleotidase"/>
</dbReference>
<dbReference type="InterPro" id="IPR036523">
    <property type="entry name" value="SurE-like_sf"/>
</dbReference>
<dbReference type="NCBIfam" id="NF001489">
    <property type="entry name" value="PRK00346.1-3"/>
    <property type="match status" value="1"/>
</dbReference>
<dbReference type="NCBIfam" id="NF001490">
    <property type="entry name" value="PRK00346.1-4"/>
    <property type="match status" value="1"/>
</dbReference>
<dbReference type="NCBIfam" id="TIGR00087">
    <property type="entry name" value="surE"/>
    <property type="match status" value="1"/>
</dbReference>
<dbReference type="PANTHER" id="PTHR30457">
    <property type="entry name" value="5'-NUCLEOTIDASE SURE"/>
    <property type="match status" value="1"/>
</dbReference>
<dbReference type="PANTHER" id="PTHR30457:SF12">
    <property type="entry name" value="5'_3'-NUCLEOTIDASE SURE"/>
    <property type="match status" value="1"/>
</dbReference>
<dbReference type="Pfam" id="PF01975">
    <property type="entry name" value="SurE"/>
    <property type="match status" value="1"/>
</dbReference>
<dbReference type="SUPFAM" id="SSF64167">
    <property type="entry name" value="SurE-like"/>
    <property type="match status" value="1"/>
</dbReference>